<sequence>GDNILKVDSFLTHQVDFSLMREIGKVFAEKFASAGITKVVTIEASGIAPAVFTAEALNVPMIFAKKAKNITMNEGILTAQVYSFTKQVTSTVSIAGKFLSPEDKVLIIDDFLANGQAAKGLIQIIEQAGATVEAIGIVIEKSFQDGRDLLEKAGYPVLSLAR</sequence>
<evidence type="ECO:0000250" key="1"/>
<evidence type="ECO:0000305" key="2"/>
<evidence type="ECO:0000312" key="3">
    <source>
        <dbReference type="EMBL" id="AAT45186.1"/>
    </source>
</evidence>
<accession>Q9ZEE3</accession>
<accession>Q6IUA7</accession>
<accession>Q9S6U7</accession>
<keyword id="KW-0963">Cytoplasm</keyword>
<keyword id="KW-0328">Glycosyltransferase</keyword>
<keyword id="KW-0660">Purine salvage</keyword>
<keyword id="KW-0808">Transferase</keyword>
<dbReference type="EC" id="2.4.2.22"/>
<dbReference type="EMBL" id="AJ232400">
    <property type="protein sequence ID" value="CAA13403.1"/>
    <property type="molecule type" value="Genomic_DNA"/>
</dbReference>
<dbReference type="EMBL" id="AY624671">
    <property type="protein sequence ID" value="AAT45186.1"/>
    <property type="molecule type" value="Genomic_DNA"/>
</dbReference>
<dbReference type="EMBL" id="AJ240618">
    <property type="protein sequence ID" value="CAB39206.1"/>
    <property type="molecule type" value="Genomic_DNA"/>
</dbReference>
<dbReference type="SMR" id="Q9ZEE3"/>
<dbReference type="UniPathway" id="UPA00602">
    <property type="reaction ID" value="UER00658"/>
</dbReference>
<dbReference type="GO" id="GO:0005737">
    <property type="term" value="C:cytoplasm"/>
    <property type="evidence" value="ECO:0007669"/>
    <property type="project" value="UniProtKB-SubCell"/>
</dbReference>
<dbReference type="GO" id="GO:0000310">
    <property type="term" value="F:xanthine phosphoribosyltransferase activity"/>
    <property type="evidence" value="ECO:0007669"/>
    <property type="project" value="UniProtKB-EC"/>
</dbReference>
<dbReference type="GO" id="GO:0006166">
    <property type="term" value="P:purine ribonucleoside salvage"/>
    <property type="evidence" value="ECO:0007669"/>
    <property type="project" value="UniProtKB-KW"/>
</dbReference>
<dbReference type="GO" id="GO:0046110">
    <property type="term" value="P:xanthine metabolic process"/>
    <property type="evidence" value="ECO:0007669"/>
    <property type="project" value="InterPro"/>
</dbReference>
<dbReference type="GO" id="GO:0032265">
    <property type="term" value="P:XMP salvage"/>
    <property type="evidence" value="ECO:0007669"/>
    <property type="project" value="UniProtKB-UniPathway"/>
</dbReference>
<dbReference type="CDD" id="cd06223">
    <property type="entry name" value="PRTases_typeI"/>
    <property type="match status" value="1"/>
</dbReference>
<dbReference type="Gene3D" id="3.40.50.2020">
    <property type="match status" value="1"/>
</dbReference>
<dbReference type="InterPro" id="IPR000836">
    <property type="entry name" value="PRibTrfase_dom"/>
</dbReference>
<dbReference type="InterPro" id="IPR029057">
    <property type="entry name" value="PRTase-like"/>
</dbReference>
<dbReference type="InterPro" id="IPR050118">
    <property type="entry name" value="Pur/Pyrimidine_PRTase"/>
</dbReference>
<dbReference type="InterPro" id="IPR010079">
    <property type="entry name" value="Xanthine_PRibTrfase"/>
</dbReference>
<dbReference type="NCBIfam" id="NF006671">
    <property type="entry name" value="PRK09219.1"/>
    <property type="match status" value="1"/>
</dbReference>
<dbReference type="NCBIfam" id="TIGR01744">
    <property type="entry name" value="XPRTase"/>
    <property type="match status" value="1"/>
</dbReference>
<dbReference type="PANTHER" id="PTHR43864">
    <property type="entry name" value="HYPOXANTHINE/GUANINE PHOSPHORIBOSYLTRANSFERASE"/>
    <property type="match status" value="1"/>
</dbReference>
<dbReference type="PANTHER" id="PTHR43864:SF1">
    <property type="entry name" value="XANTHINE PHOSPHORIBOSYLTRANSFERASE"/>
    <property type="match status" value="1"/>
</dbReference>
<dbReference type="Pfam" id="PF00156">
    <property type="entry name" value="Pribosyltran"/>
    <property type="match status" value="1"/>
</dbReference>
<dbReference type="SUPFAM" id="SSF53271">
    <property type="entry name" value="PRTase-like"/>
    <property type="match status" value="1"/>
</dbReference>
<proteinExistence type="inferred from homology"/>
<name>XPT_STRMT</name>
<gene>
    <name type="primary">xpt</name>
</gene>
<protein>
    <recommendedName>
        <fullName>Xanthine phosphoribosyltransferase</fullName>
        <shortName>XPRTase</shortName>
        <ecNumber>2.4.2.22</ecNumber>
    </recommendedName>
</protein>
<comment type="function">
    <text evidence="1">Converts the preformed base xanthine, a product of nucleic acid breakdown, to xanthosine 5'-monophosphate (XMP), so it can be reused for RNA or DNA synthesis.</text>
</comment>
<comment type="catalytic activity">
    <reaction>
        <text>XMP + diphosphate = xanthine + 5-phospho-alpha-D-ribose 1-diphosphate</text>
        <dbReference type="Rhea" id="RHEA:10800"/>
        <dbReference type="ChEBI" id="CHEBI:17712"/>
        <dbReference type="ChEBI" id="CHEBI:33019"/>
        <dbReference type="ChEBI" id="CHEBI:57464"/>
        <dbReference type="ChEBI" id="CHEBI:58017"/>
        <dbReference type="EC" id="2.4.2.22"/>
    </reaction>
</comment>
<comment type="pathway">
    <text>Purine metabolism; XMP biosynthesis via salvage pathway; XMP from xanthine: step 1/1.</text>
</comment>
<comment type="subunit">
    <text evidence="1">Homodimer.</text>
</comment>
<comment type="subcellular location">
    <subcellularLocation>
        <location evidence="2">Cytoplasm</location>
    </subcellularLocation>
</comment>
<comment type="similarity">
    <text evidence="2">Belongs to the purine/pyrimidine phosphoribosyltransferase family. Xpt subfamily.</text>
</comment>
<reference key="1">
    <citation type="journal article" date="1998" name="Microbiology">
        <title>A multilocus sequence typing scheme for Streptococcus pneumoniae: identification of clones associated with serious invasive disease.</title>
        <authorList>
            <person name="Enright M.C."/>
            <person name="Spratt B.G."/>
        </authorList>
    </citation>
    <scope>NUCLEOTIDE SEQUENCE [GENOMIC DNA]</scope>
    <source>
        <strain>PN92/120</strain>
    </source>
</reference>
<reference evidence="3" key="2">
    <citation type="submission" date="2004-05" db="EMBL/GenBank/DDBJ databases">
        <title>Optochin sensitive, bile-soluble, non-pneumococcal streptococci in HIV-seropositive patients.</title>
        <authorList>
            <person name="Leegaard T.M."/>
            <person name="Caugant D.A."/>
            <person name="Mansaker T."/>
            <person name="Froholm L.O."/>
            <person name="Hoiby E.A."/>
        </authorList>
    </citation>
    <scope>NUCLEOTIDE SEQUENCE [GENOMIC DNA]</scope>
    <source>
        <strain>1060</strain>
    </source>
</reference>
<reference evidence="2" key="3">
    <citation type="journal article" date="1999" name="Infect. Immun.">
        <title>Molecular characterization of equine isolates of Streptococcus pneumoniae: natural disruption of genes encoding the virulence factors pneumolysin and autolysin.</title>
        <authorList>
            <person name="Whatmore A.M."/>
            <person name="King S.J."/>
            <person name="Doherty N.C."/>
            <person name="Sturgeon D."/>
            <person name="Chanter N."/>
            <person name="Dowson C.G."/>
        </authorList>
    </citation>
    <scope>NUCLEOTIDE SEQUENCE [GENOMIC DNA] OF 10-140</scope>
    <source>
        <strain>ATCC 49456 / DSM 12643 / LMG 14557 / NCTC 12261</strain>
    </source>
</reference>
<feature type="chain" id="PRO_0000139698" description="Xanthine phosphoribosyltransferase">
    <location>
        <begin position="1" status="less than"/>
        <end position="162" status="greater than"/>
    </location>
</feature>
<feature type="binding site" evidence="1">
    <location>
        <position position="5"/>
    </location>
    <ligand>
        <name>xanthine</name>
        <dbReference type="ChEBI" id="CHEBI:17712"/>
    </ligand>
</feature>
<feature type="binding site" evidence="1">
    <location>
        <position position="12"/>
    </location>
    <ligand>
        <name>xanthine</name>
        <dbReference type="ChEBI" id="CHEBI:17712"/>
    </ligand>
</feature>
<feature type="binding site" evidence="1">
    <location>
        <begin position="113"/>
        <end position="117"/>
    </location>
    <ligand>
        <name>5-phospho-alpha-D-ribose 1-diphosphate</name>
        <dbReference type="ChEBI" id="CHEBI:58017"/>
    </ligand>
</feature>
<feature type="binding site" evidence="1">
    <location>
        <position position="141"/>
    </location>
    <ligand>
        <name>xanthine</name>
        <dbReference type="ChEBI" id="CHEBI:17712"/>
    </ligand>
</feature>
<feature type="sequence variant" description="In strain: 12261." evidence="2">
    <original>E</original>
    <variation>D</variation>
    <location>
        <position position="29"/>
    </location>
</feature>
<feature type="sequence variant" description="In strain: 12261." evidence="2">
    <original>V</original>
    <variation>I</variation>
    <location>
        <position position="51"/>
    </location>
</feature>
<feature type="sequence variant" description="In strain: 12261." evidence="2">
    <original>N</original>
    <variation>D</variation>
    <location>
        <position position="58"/>
    </location>
</feature>
<feature type="sequence variant" description="In strain: 12261." evidence="2">
    <original>T</original>
    <variation>K</variation>
    <location>
        <position position="131"/>
    </location>
</feature>
<feature type="non-terminal residue" evidence="2">
    <location>
        <position position="1"/>
    </location>
</feature>
<feature type="non-terminal residue" evidence="2">
    <location>
        <position position="162"/>
    </location>
</feature>
<organism>
    <name type="scientific">Streptococcus mitis</name>
    <dbReference type="NCBI Taxonomy" id="28037"/>
    <lineage>
        <taxon>Bacteria</taxon>
        <taxon>Bacillati</taxon>
        <taxon>Bacillota</taxon>
        <taxon>Bacilli</taxon>
        <taxon>Lactobacillales</taxon>
        <taxon>Streptococcaceae</taxon>
        <taxon>Streptococcus</taxon>
        <taxon>Streptococcus mitis group</taxon>
    </lineage>
</organism>